<organism>
    <name type="scientific">Borreliella afzelii (strain PKo)</name>
    <name type="common">Borrelia afzelii</name>
    <dbReference type="NCBI Taxonomy" id="390236"/>
    <lineage>
        <taxon>Bacteria</taxon>
        <taxon>Pseudomonadati</taxon>
        <taxon>Spirochaetota</taxon>
        <taxon>Spirochaetia</taxon>
        <taxon>Spirochaetales</taxon>
        <taxon>Borreliaceae</taxon>
        <taxon>Borreliella</taxon>
    </lineage>
</organism>
<accession>Q0SPE3</accession>
<accession>G0IQ51</accession>
<proteinExistence type="inferred from homology"/>
<comment type="function">
    <text evidence="1">Transfers and isomerizes the ribose moiety from AdoMet to the 7-aminomethyl group of 7-deazaguanine (preQ1-tRNA) to give epoxyqueuosine (oQ-tRNA).</text>
</comment>
<comment type="catalytic activity">
    <reaction evidence="1">
        <text>7-aminomethyl-7-carbaguanosine(34) in tRNA + S-adenosyl-L-methionine = epoxyqueuosine(34) in tRNA + adenine + L-methionine + 2 H(+)</text>
        <dbReference type="Rhea" id="RHEA:32155"/>
        <dbReference type="Rhea" id="RHEA-COMP:10342"/>
        <dbReference type="Rhea" id="RHEA-COMP:18582"/>
        <dbReference type="ChEBI" id="CHEBI:15378"/>
        <dbReference type="ChEBI" id="CHEBI:16708"/>
        <dbReference type="ChEBI" id="CHEBI:57844"/>
        <dbReference type="ChEBI" id="CHEBI:59789"/>
        <dbReference type="ChEBI" id="CHEBI:82833"/>
        <dbReference type="ChEBI" id="CHEBI:194443"/>
        <dbReference type="EC" id="2.4.99.17"/>
    </reaction>
</comment>
<comment type="pathway">
    <text evidence="1">tRNA modification; tRNA-queuosine biosynthesis.</text>
</comment>
<comment type="subunit">
    <text evidence="1">Monomer.</text>
</comment>
<comment type="subcellular location">
    <subcellularLocation>
        <location evidence="1">Cytoplasm</location>
    </subcellularLocation>
</comment>
<comment type="similarity">
    <text evidence="1">Belongs to the QueA family.</text>
</comment>
<reference key="1">
    <citation type="journal article" date="2006" name="BMC Genomics">
        <title>Comparative genome analysis: selection pressure on the Borrelia vls cassettes is essential for infectivity.</title>
        <authorList>
            <person name="Gloeckner G."/>
            <person name="Schulte-Spechtel U."/>
            <person name="Schilhabel M."/>
            <person name="Felder M."/>
            <person name="Suehnel J."/>
            <person name="Wilske B."/>
            <person name="Platzer M."/>
        </authorList>
    </citation>
    <scope>NUCLEOTIDE SEQUENCE [LARGE SCALE GENOMIC DNA]</scope>
    <source>
        <strain>PKo</strain>
    </source>
</reference>
<reference key="2">
    <citation type="journal article" date="2011" name="J. Bacteriol.">
        <title>Whole-genome sequences of two Borrelia afzelii and two Borrelia garinii Lyme disease agent isolates.</title>
        <authorList>
            <person name="Casjens S.R."/>
            <person name="Mongodin E.F."/>
            <person name="Qiu W.G."/>
            <person name="Dunn J.J."/>
            <person name="Luft B.J."/>
            <person name="Fraser-Liggett C.M."/>
            <person name="Schutzer S.E."/>
        </authorList>
    </citation>
    <scope>NUCLEOTIDE SEQUENCE [LARGE SCALE GENOMIC DNA]</scope>
    <source>
        <strain>PKo</strain>
    </source>
</reference>
<evidence type="ECO:0000255" key="1">
    <source>
        <dbReference type="HAMAP-Rule" id="MF_00113"/>
    </source>
</evidence>
<protein>
    <recommendedName>
        <fullName evidence="1">S-adenosylmethionine:tRNA ribosyltransferase-isomerase</fullName>
        <ecNumber evidence="1">2.4.99.17</ecNumber>
    </recommendedName>
    <alternativeName>
        <fullName evidence="1">Queuosine biosynthesis protein QueA</fullName>
    </alternativeName>
</protein>
<gene>
    <name evidence="1" type="primary">queA</name>
    <name type="ordered locus">BAPKO_0020</name>
    <name type="ordered locus">BafPKo_0021</name>
</gene>
<dbReference type="EC" id="2.4.99.17" evidence="1"/>
<dbReference type="EMBL" id="CP000395">
    <property type="protein sequence ID" value="ABH01285.1"/>
    <property type="molecule type" value="Genomic_DNA"/>
</dbReference>
<dbReference type="EMBL" id="CP002933">
    <property type="protein sequence ID" value="AEL69255.1"/>
    <property type="molecule type" value="Genomic_DNA"/>
</dbReference>
<dbReference type="RefSeq" id="WP_004790512.1">
    <property type="nucleotide sequence ID" value="NZ_CP160066.1"/>
</dbReference>
<dbReference type="SMR" id="Q0SPE3"/>
<dbReference type="STRING" id="29518.BLA32_04175"/>
<dbReference type="KEGG" id="baf:BAPKO_0020"/>
<dbReference type="KEGG" id="bafz:BafPKo_0021"/>
<dbReference type="PATRIC" id="fig|390236.22.peg.21"/>
<dbReference type="eggNOG" id="COG0809">
    <property type="taxonomic scope" value="Bacteria"/>
</dbReference>
<dbReference type="HOGENOM" id="CLU_039110_1_0_12"/>
<dbReference type="OrthoDB" id="9805933at2"/>
<dbReference type="UniPathway" id="UPA00392"/>
<dbReference type="Proteomes" id="UP000005216">
    <property type="component" value="Chromosome"/>
</dbReference>
<dbReference type="GO" id="GO:0005737">
    <property type="term" value="C:cytoplasm"/>
    <property type="evidence" value="ECO:0007669"/>
    <property type="project" value="UniProtKB-SubCell"/>
</dbReference>
<dbReference type="GO" id="GO:0051075">
    <property type="term" value="F:S-adenosylmethionine:tRNA ribosyltransferase-isomerase activity"/>
    <property type="evidence" value="ECO:0007669"/>
    <property type="project" value="UniProtKB-EC"/>
</dbReference>
<dbReference type="GO" id="GO:0008616">
    <property type="term" value="P:queuosine biosynthetic process"/>
    <property type="evidence" value="ECO:0007669"/>
    <property type="project" value="UniProtKB-UniRule"/>
</dbReference>
<dbReference type="GO" id="GO:0002099">
    <property type="term" value="P:tRNA wobble guanine modification"/>
    <property type="evidence" value="ECO:0007669"/>
    <property type="project" value="TreeGrafter"/>
</dbReference>
<dbReference type="Gene3D" id="2.40.10.240">
    <property type="entry name" value="QueA-like"/>
    <property type="match status" value="1"/>
</dbReference>
<dbReference type="Gene3D" id="3.40.1780.10">
    <property type="entry name" value="QueA-like"/>
    <property type="match status" value="1"/>
</dbReference>
<dbReference type="HAMAP" id="MF_00113">
    <property type="entry name" value="QueA"/>
    <property type="match status" value="1"/>
</dbReference>
<dbReference type="InterPro" id="IPR003699">
    <property type="entry name" value="QueA"/>
</dbReference>
<dbReference type="InterPro" id="IPR042118">
    <property type="entry name" value="QueA_dom1"/>
</dbReference>
<dbReference type="InterPro" id="IPR042119">
    <property type="entry name" value="QueA_dom2"/>
</dbReference>
<dbReference type="InterPro" id="IPR036100">
    <property type="entry name" value="QueA_sf"/>
</dbReference>
<dbReference type="NCBIfam" id="NF001140">
    <property type="entry name" value="PRK00147.1"/>
    <property type="match status" value="1"/>
</dbReference>
<dbReference type="NCBIfam" id="TIGR00113">
    <property type="entry name" value="queA"/>
    <property type="match status" value="1"/>
</dbReference>
<dbReference type="PANTHER" id="PTHR30307">
    <property type="entry name" value="S-ADENOSYLMETHIONINE:TRNA RIBOSYLTRANSFERASE-ISOMERASE"/>
    <property type="match status" value="1"/>
</dbReference>
<dbReference type="PANTHER" id="PTHR30307:SF0">
    <property type="entry name" value="S-ADENOSYLMETHIONINE:TRNA RIBOSYLTRANSFERASE-ISOMERASE"/>
    <property type="match status" value="1"/>
</dbReference>
<dbReference type="Pfam" id="PF02547">
    <property type="entry name" value="Queuosine_synth"/>
    <property type="match status" value="1"/>
</dbReference>
<dbReference type="SUPFAM" id="SSF111337">
    <property type="entry name" value="QueA-like"/>
    <property type="match status" value="1"/>
</dbReference>
<sequence length="346" mass="39904">MKTKEFHFNLPYSLIAQYPSEKRGSSRLMVLDPKLQKIYHENSVNNILKYINSDTFIVFNNSKVRKSRMYAESEMGSNVEFLILDRIGTDLFTALISKSKKQIVGNVYKFPEGLMGKILSKNSSEIVLKFNDDVREDYFEKHGFVPIPPYIKRDYDKIDEDRYQTIYSKYVGSAASATAGLHFSRDLFSAFEKNNIEYDFITLHVGLGTFLPVRSKKVEEHNMHFETFLIKDCVANRLENAKFLGKKVLSIGTTTLRALESSYDNKLKKFKTGQQSTNLFIYPGKNYCFKFVDMLFTNFHTPQSTLLMLVSAFAGKDFVFSSYEEGINKGYKFFSYGDAMLVLNHI</sequence>
<name>QUEA_BORAP</name>
<keyword id="KW-0963">Cytoplasm</keyword>
<keyword id="KW-0671">Queuosine biosynthesis</keyword>
<keyword id="KW-0949">S-adenosyl-L-methionine</keyword>
<keyword id="KW-0808">Transferase</keyword>
<feature type="chain" id="PRO_1000015181" description="S-adenosylmethionine:tRNA ribosyltransferase-isomerase">
    <location>
        <begin position="1"/>
        <end position="346"/>
    </location>
</feature>